<proteinExistence type="evidence at protein level"/>
<protein>
    <recommendedName>
        <fullName>Inner membrane protein YeeR</fullName>
    </recommendedName>
</protein>
<comment type="subcellular location">
    <subcellularLocation>
        <location>Cell inner membrane</location>
        <topology>Multi-pass membrane protein</topology>
    </subcellularLocation>
</comment>
<reference key="1">
    <citation type="journal article" date="1997" name="Science">
        <title>The complete genome sequence of Escherichia coli K-12.</title>
        <authorList>
            <person name="Blattner F.R."/>
            <person name="Plunkett G. III"/>
            <person name="Bloch C.A."/>
            <person name="Perna N.T."/>
            <person name="Burland V."/>
            <person name="Riley M."/>
            <person name="Collado-Vides J."/>
            <person name="Glasner J.D."/>
            <person name="Rode C.K."/>
            <person name="Mayhew G.F."/>
            <person name="Gregor J."/>
            <person name="Davis N.W."/>
            <person name="Kirkpatrick H.A."/>
            <person name="Goeden M.A."/>
            <person name="Rose D.J."/>
            <person name="Mau B."/>
            <person name="Shao Y."/>
        </authorList>
    </citation>
    <scope>NUCLEOTIDE SEQUENCE [LARGE SCALE GENOMIC DNA]</scope>
    <source>
        <strain>K12 / MG1655 / ATCC 47076</strain>
    </source>
</reference>
<reference key="2">
    <citation type="journal article" date="2006" name="Mol. Syst. Biol.">
        <title>Highly accurate genome sequences of Escherichia coli K-12 strains MG1655 and W3110.</title>
        <authorList>
            <person name="Hayashi K."/>
            <person name="Morooka N."/>
            <person name="Yamamoto Y."/>
            <person name="Fujita K."/>
            <person name="Isono K."/>
            <person name="Choi S."/>
            <person name="Ohtsubo E."/>
            <person name="Baba T."/>
            <person name="Wanner B.L."/>
            <person name="Mori H."/>
            <person name="Horiuchi T."/>
        </authorList>
    </citation>
    <scope>NUCLEOTIDE SEQUENCE [LARGE SCALE GENOMIC DNA]</scope>
    <source>
        <strain>K12 / W3110 / ATCC 27325 / DSM 5911</strain>
    </source>
</reference>
<reference key="3">
    <citation type="journal article" date="2005" name="Science">
        <title>Global topology analysis of the Escherichia coli inner membrane proteome.</title>
        <authorList>
            <person name="Daley D.O."/>
            <person name="Rapp M."/>
            <person name="Granseth E."/>
            <person name="Melen K."/>
            <person name="Drew D."/>
            <person name="von Heijne G."/>
        </authorList>
    </citation>
    <scope>TOPOLOGY [LARGE SCALE ANALYSIS]</scope>
    <source>
        <strain>K12 / MG1655 / ATCC 47076</strain>
    </source>
</reference>
<organism>
    <name type="scientific">Escherichia coli (strain K12)</name>
    <dbReference type="NCBI Taxonomy" id="83333"/>
    <lineage>
        <taxon>Bacteria</taxon>
        <taxon>Pseudomonadati</taxon>
        <taxon>Pseudomonadota</taxon>
        <taxon>Gammaproteobacteria</taxon>
        <taxon>Enterobacterales</taxon>
        <taxon>Enterobacteriaceae</taxon>
        <taxon>Escherichia</taxon>
    </lineage>
</organism>
<gene>
    <name type="primary">yeeR</name>
    <name type="ordered locus">b2001</name>
    <name type="ordered locus">JW1983</name>
</gene>
<keyword id="KW-0997">Cell inner membrane</keyword>
<keyword id="KW-1003">Cell membrane</keyword>
<keyword id="KW-0472">Membrane</keyword>
<keyword id="KW-1185">Reference proteome</keyword>
<keyword id="KW-0812">Transmembrane</keyword>
<keyword id="KW-1133">Transmembrane helix</keyword>
<feature type="chain" id="PRO_0000169111" description="Inner membrane protein YeeR">
    <location>
        <begin position="1"/>
        <end position="510"/>
    </location>
</feature>
<feature type="topological domain" description="Cytoplasmic" evidence="1">
    <location>
        <position position="1"/>
    </location>
</feature>
<feature type="transmembrane region" description="Helical" evidence="1">
    <location>
        <begin position="2"/>
        <end position="22"/>
    </location>
</feature>
<feature type="topological domain" description="Periplasmic" evidence="1">
    <location>
        <begin position="23"/>
        <end position="30"/>
    </location>
</feature>
<feature type="transmembrane region" description="Helical" evidence="1">
    <location>
        <begin position="31"/>
        <end position="51"/>
    </location>
</feature>
<feature type="topological domain" description="Cytoplasmic" evidence="1">
    <location>
        <begin position="52"/>
        <end position="61"/>
    </location>
</feature>
<feature type="transmembrane region" description="Helical" evidence="1">
    <location>
        <begin position="62"/>
        <end position="82"/>
    </location>
</feature>
<feature type="topological domain" description="Periplasmic" evidence="1">
    <location>
        <begin position="83"/>
        <end position="94"/>
    </location>
</feature>
<feature type="transmembrane region" description="Helical" evidence="1">
    <location>
        <begin position="95"/>
        <end position="115"/>
    </location>
</feature>
<feature type="topological domain" description="Cytoplasmic" evidence="1">
    <location>
        <begin position="116"/>
        <end position="136"/>
    </location>
</feature>
<feature type="transmembrane region" description="Helical" evidence="1">
    <location>
        <begin position="137"/>
        <end position="157"/>
    </location>
</feature>
<feature type="topological domain" description="Periplasmic" evidence="1">
    <location>
        <begin position="158"/>
        <end position="164"/>
    </location>
</feature>
<feature type="transmembrane region" description="Helical" evidence="1">
    <location>
        <begin position="165"/>
        <end position="185"/>
    </location>
</feature>
<feature type="topological domain" description="Cytoplasmic" evidence="1">
    <location>
        <begin position="186"/>
        <end position="510"/>
    </location>
</feature>
<name>YEER_ECOLI</name>
<dbReference type="EMBL" id="U00096">
    <property type="protein sequence ID" value="AAC75062.2"/>
    <property type="molecule type" value="Genomic_DNA"/>
</dbReference>
<dbReference type="EMBL" id="AP009048">
    <property type="protein sequence ID" value="BAE76563.1"/>
    <property type="molecule type" value="Genomic_DNA"/>
</dbReference>
<dbReference type="PIR" id="H64964">
    <property type="entry name" value="H64964"/>
</dbReference>
<dbReference type="RefSeq" id="NP_416505.2">
    <property type="nucleotide sequence ID" value="NC_000913.3"/>
</dbReference>
<dbReference type="RefSeq" id="WP_001350525.1">
    <property type="nucleotide sequence ID" value="NZ_LN832404.1"/>
</dbReference>
<dbReference type="BioGRID" id="4260666">
    <property type="interactions" value="94"/>
</dbReference>
<dbReference type="BioGRID" id="850861">
    <property type="interactions" value="1"/>
</dbReference>
<dbReference type="DIP" id="DIP-11864N"/>
<dbReference type="FunCoup" id="P76361">
    <property type="interactions" value="26"/>
</dbReference>
<dbReference type="IntAct" id="P76361">
    <property type="interactions" value="1"/>
</dbReference>
<dbReference type="STRING" id="511145.b2001"/>
<dbReference type="PaxDb" id="511145-b2001"/>
<dbReference type="EnsemblBacteria" id="AAC75062">
    <property type="protein sequence ID" value="AAC75062"/>
    <property type="gene ID" value="b2001"/>
</dbReference>
<dbReference type="GeneID" id="946512"/>
<dbReference type="KEGG" id="ecj:JW1983"/>
<dbReference type="KEGG" id="eco:b2001"/>
<dbReference type="PATRIC" id="fig|1411691.4.peg.252"/>
<dbReference type="EchoBASE" id="EB3166"/>
<dbReference type="eggNOG" id="COG2020">
    <property type="taxonomic scope" value="Bacteria"/>
</dbReference>
<dbReference type="HOGENOM" id="CLU_620450_0_0_6"/>
<dbReference type="InParanoid" id="P76361"/>
<dbReference type="OrthoDB" id="3196385at2"/>
<dbReference type="BioCyc" id="EcoCyc:G7081-MONOMER"/>
<dbReference type="PRO" id="PR:P76361"/>
<dbReference type="Proteomes" id="UP000000625">
    <property type="component" value="Chromosome"/>
</dbReference>
<dbReference type="GO" id="GO:0005886">
    <property type="term" value="C:plasma membrane"/>
    <property type="evidence" value="ECO:0000314"/>
    <property type="project" value="EcoCyc"/>
</dbReference>
<accession>P76361</accession>
<accession>Q2MAZ3</accession>
<evidence type="ECO:0000255" key="1"/>
<sequence>MLQIVGALILLIAGFAILRLLFRALISTASALAGLILLCLFGPALLAGYITERITRLFHIRWLAGVFLTIAGMIISFMWGLDGKHIALEAHTFDSVKFILTTALAGGLLAVPLQIKNIQQNGITPEDISKEINGYYCCFYTAFFLMACSACAPLIALQYDISPSLMWWGGLLYWLAALVTLLWAASQIQALKKLTCAISQTLEEQPVLNSKSWLTSLQNDYSLPDSLTERIWLTLISQRISRGELREFELADGNWLLNNAWYERNMAGFNEQLKENLSFTPDELKTLFRNRLNLSPEANDDFLDRCLDGGDWYPFSEGRRFVSFHHVDELRICASCGLTEVHHAPENHKPDPEWYCSSLCRETETLCQEIYERPYNSFISDATANGLILMKLPETWSTNEKMFASGGQGHGFAAERGNHIVDRVRLKNARILGDNNARNGADRLVSGTEIQTKYCSTAARSVGAAFDGQNGQYRYMGNNGPMQLEVPRDQYAGAVETMRNKIREGKVEER</sequence>